<comment type="function">
    <text evidence="3">Involved in a reduction step in the biosynthesis of the plant steroid, brassinolide (BL) (PubMed:17565582). Promotes cotton fibers (seed trichomes) initiation and elongation (PubMed:17565582).</text>
</comment>
<comment type="catalytic activity">
    <reaction evidence="3">
        <text>a 3-oxo-5alpha-steroid + NADP(+) = a 3-oxo-Delta(4)-steroid + NADPH + H(+)</text>
        <dbReference type="Rhea" id="RHEA:54384"/>
        <dbReference type="ChEBI" id="CHEBI:13601"/>
        <dbReference type="ChEBI" id="CHEBI:15378"/>
        <dbReference type="ChEBI" id="CHEBI:47909"/>
        <dbReference type="ChEBI" id="CHEBI:57783"/>
        <dbReference type="ChEBI" id="CHEBI:58349"/>
        <dbReference type="EC" id="1.3.1.22"/>
    </reaction>
</comment>
<comment type="pathway">
    <text evidence="3">Plant hormone biosynthesis; brassinosteroid biosynthesis.</text>
</comment>
<comment type="subcellular location">
    <subcellularLocation>
        <location evidence="1">Membrane</location>
        <topology evidence="1">Multi-pass membrane protein</topology>
    </subcellularLocation>
</comment>
<comment type="tissue specificity">
    <text evidence="2 3">Accumulates in fibers (seed trichomes) during both their initiation and elongation phases. Also present in roots, hypocotyls, leaves, flowers and ovules, and barely in cotyledons.</text>
</comment>
<comment type="disruption phenotype">
    <text evidence="3">Impaired fiber initiation and elongation.</text>
</comment>
<comment type="similarity">
    <text evidence="6">Belongs to the steroid 5-alpha reductase family.</text>
</comment>
<evidence type="ECO:0000255" key="1"/>
<evidence type="ECO:0000269" key="2">
    <source>
    </source>
</evidence>
<evidence type="ECO:0000269" key="3">
    <source>
    </source>
</evidence>
<evidence type="ECO:0000303" key="4">
    <source>
    </source>
</evidence>
<evidence type="ECO:0000303" key="5">
    <source>
    </source>
</evidence>
<evidence type="ECO:0000305" key="6"/>
<reference key="1">
    <citation type="journal article" date="2006" name="Plant Cell">
        <title>Transcriptome profiling, molecular biological, and physiological studies reveal a major role for ethylene in cotton fiber cell elongation.</title>
        <authorList>
            <person name="Shi Y.-H."/>
            <person name="Zhu S.-W."/>
            <person name="Mao X.-Z."/>
            <person name="Feng J.-X."/>
            <person name="Qin Y.-M."/>
            <person name="Zhang L."/>
            <person name="Cheng J."/>
            <person name="Wei L.-P."/>
            <person name="Wang Z.-Y."/>
            <person name="Zhu Y.-X."/>
        </authorList>
    </citation>
    <scope>NUCLEOTIDE SEQUENCE [MRNA]</scope>
    <scope>TISSUE SPECIFICITY</scope>
    <source>
        <strain>cv. Xuzhou142</strain>
    </source>
</reference>
<reference key="2">
    <citation type="journal article" date="2007" name="Plant J.">
        <title>GhDET2, a steroid 5alpha-reductase, plays an important role in cotton fiber cell initiation and elongation.</title>
        <authorList>
            <person name="Luo M."/>
            <person name="Xiao Y."/>
            <person name="Li X."/>
            <person name="Lu X."/>
            <person name="Deng W."/>
            <person name="Li D."/>
            <person name="Hou L."/>
            <person name="Hu M."/>
            <person name="Li Y."/>
            <person name="Pei Y."/>
        </authorList>
    </citation>
    <scope>NUCLEOTIDE SEQUENCE [MRNA]</scope>
    <scope>FUNCTION</scope>
    <scope>DISRUPTION PHENOTYPE</scope>
    <scope>CATALYTIC ACTIVITY</scope>
    <scope>TISSUE SPECIFICITY</scope>
    <scope>PATHWAY</scope>
    <source>
        <strain>cv. Xuzhou142</strain>
        <tissue>Fiber</tissue>
    </source>
</reference>
<sequence>MASDQTLFHYCLLTLYIIALPTWISLYFLQAPYGKHNRPGWGPTISPPLAWFLMESPTLWLTFFLFPSGQHFYNPKSFLLISPFLFHYFNRTVLYPLRLARNTTQTRGFPVSVAFMAFGFNLLNGYLQARWVSHYKDDYENEELFWWRFLAGLLIFVVGMWVNVRADKVLVGLKKQGDGGYKIPRGGLFELVSCPNYFGEIMEWFGWAVMTWSWVGFGFFLYTCANLMPRARATRLWYLEKFKDDYPKDRKAVIPFIY</sequence>
<protein>
    <recommendedName>
        <fullName evidence="5">Steroid 5-alpha-reductase DET2</fullName>
        <shortName evidence="5">GhDET2</shortName>
        <ecNumber evidence="3">1.3.1.22</ecNumber>
    </recommendedName>
</protein>
<accession>Q2QDF6</accession>
<accession>Q8H1T2</accession>
<gene>
    <name evidence="4 5" type="primary">DET2</name>
</gene>
<keyword id="KW-0472">Membrane</keyword>
<keyword id="KW-0521">NADP</keyword>
<keyword id="KW-0560">Oxidoreductase</keyword>
<keyword id="KW-1185">Reference proteome</keyword>
<keyword id="KW-0812">Transmembrane</keyword>
<keyword id="KW-1133">Transmembrane helix</keyword>
<feature type="chain" id="PRO_0000418516" description="Steroid 5-alpha-reductase DET2">
    <location>
        <begin position="1"/>
        <end position="258"/>
    </location>
</feature>
<feature type="transmembrane region" description="Helical" evidence="1">
    <location>
        <begin position="8"/>
        <end position="28"/>
    </location>
</feature>
<feature type="transmembrane region" description="Helical" evidence="1">
    <location>
        <begin position="49"/>
        <end position="69"/>
    </location>
</feature>
<feature type="transmembrane region" description="Helical" evidence="1">
    <location>
        <begin position="77"/>
        <end position="97"/>
    </location>
</feature>
<feature type="transmembrane region" description="Helical" evidence="1">
    <location>
        <begin position="109"/>
        <end position="129"/>
    </location>
</feature>
<feature type="transmembrane region" description="Helical" evidence="1">
    <location>
        <begin position="144"/>
        <end position="164"/>
    </location>
</feature>
<feature type="transmembrane region" description="Helical" evidence="1">
    <location>
        <begin position="201"/>
        <end position="221"/>
    </location>
</feature>
<proteinExistence type="evidence at protein level"/>
<organism>
    <name type="scientific">Gossypium hirsutum</name>
    <name type="common">Upland cotton</name>
    <name type="synonym">Gossypium mexicanum</name>
    <dbReference type="NCBI Taxonomy" id="3635"/>
    <lineage>
        <taxon>Eukaryota</taxon>
        <taxon>Viridiplantae</taxon>
        <taxon>Streptophyta</taxon>
        <taxon>Embryophyta</taxon>
        <taxon>Tracheophyta</taxon>
        <taxon>Spermatophyta</taxon>
        <taxon>Magnoliopsida</taxon>
        <taxon>eudicotyledons</taxon>
        <taxon>Gunneridae</taxon>
        <taxon>Pentapetalae</taxon>
        <taxon>rosids</taxon>
        <taxon>malvids</taxon>
        <taxon>Malvales</taxon>
        <taxon>Malvaceae</taxon>
        <taxon>Malvoideae</taxon>
        <taxon>Gossypium</taxon>
    </lineage>
</organism>
<name>DET2_GOSHI</name>
<dbReference type="EC" id="1.3.1.22" evidence="3"/>
<dbReference type="EMBL" id="DQ116446">
    <property type="protein sequence ID" value="AAZ83346.1"/>
    <property type="molecule type" value="mRNA"/>
</dbReference>
<dbReference type="EMBL" id="AY141136">
    <property type="protein sequence ID" value="AAN28012.1"/>
    <property type="molecule type" value="mRNA"/>
</dbReference>
<dbReference type="RefSeq" id="NP_001314480.1">
    <property type="nucleotide sequence ID" value="NM_001327551.1"/>
</dbReference>
<dbReference type="SMR" id="Q2QDF6"/>
<dbReference type="STRING" id="3635.Q2QDF6"/>
<dbReference type="PaxDb" id="3635-Q2QDF6"/>
<dbReference type="GeneID" id="107948867"/>
<dbReference type="KEGG" id="ghi:107948867"/>
<dbReference type="OMA" id="PHYALEW"/>
<dbReference type="OrthoDB" id="305at41938"/>
<dbReference type="UniPathway" id="UPA00381"/>
<dbReference type="Proteomes" id="UP000189702">
    <property type="component" value="Unplaced"/>
</dbReference>
<dbReference type="GO" id="GO:0016020">
    <property type="term" value="C:membrane"/>
    <property type="evidence" value="ECO:0007669"/>
    <property type="project" value="UniProtKB-SubCell"/>
</dbReference>
<dbReference type="GO" id="GO:0047751">
    <property type="term" value="F:3-oxo-5-alpha-steroid 4-dehydrogenase (NADP+) activity"/>
    <property type="evidence" value="ECO:0000314"/>
    <property type="project" value="UniProtKB"/>
</dbReference>
<dbReference type="GO" id="GO:0016491">
    <property type="term" value="F:oxidoreductase activity"/>
    <property type="evidence" value="ECO:0000318"/>
    <property type="project" value="GO_Central"/>
</dbReference>
<dbReference type="GO" id="GO:0016132">
    <property type="term" value="P:brassinosteroid biosynthetic process"/>
    <property type="evidence" value="ECO:0000318"/>
    <property type="project" value="GO_Central"/>
</dbReference>
<dbReference type="GO" id="GO:0090378">
    <property type="term" value="P:seed trichome elongation"/>
    <property type="evidence" value="ECO:0000315"/>
    <property type="project" value="UniProtKB"/>
</dbReference>
<dbReference type="GO" id="GO:0090377">
    <property type="term" value="P:seed trichome initiation"/>
    <property type="evidence" value="ECO:0000315"/>
    <property type="project" value="UniProtKB"/>
</dbReference>
<dbReference type="FunFam" id="1.20.120.1630:FF:000002">
    <property type="entry name" value="Steroid 5 alpha-reductase 1"/>
    <property type="match status" value="1"/>
</dbReference>
<dbReference type="Gene3D" id="1.20.120.1630">
    <property type="match status" value="1"/>
</dbReference>
<dbReference type="InterPro" id="IPR016636">
    <property type="entry name" value="3-oxo-5-alpha-steroid_4-DH"/>
</dbReference>
<dbReference type="InterPro" id="IPR001104">
    <property type="entry name" value="3-oxo-5_a-steroid_4-DH_C"/>
</dbReference>
<dbReference type="InterPro" id="IPR039357">
    <property type="entry name" value="SRD5A/TECR"/>
</dbReference>
<dbReference type="PANTHER" id="PTHR10556">
    <property type="entry name" value="3-OXO-5-ALPHA-STEROID 4-DEHYDROGENASE"/>
    <property type="match status" value="1"/>
</dbReference>
<dbReference type="PANTHER" id="PTHR10556:SF43">
    <property type="entry name" value="STEROID 5-ALPHA-REDUCTASE DET2"/>
    <property type="match status" value="1"/>
</dbReference>
<dbReference type="Pfam" id="PF02544">
    <property type="entry name" value="Steroid_dh"/>
    <property type="match status" value="1"/>
</dbReference>
<dbReference type="PIRSF" id="PIRSF015596">
    <property type="entry name" value="5_alpha-SR2"/>
    <property type="match status" value="1"/>
</dbReference>
<dbReference type="PROSITE" id="PS50244">
    <property type="entry name" value="S5A_REDUCTASE"/>
    <property type="match status" value="1"/>
</dbReference>